<organism>
    <name type="scientific">Campylobacter jejuni (strain RM1221)</name>
    <dbReference type="NCBI Taxonomy" id="195099"/>
    <lineage>
        <taxon>Bacteria</taxon>
        <taxon>Pseudomonadati</taxon>
        <taxon>Campylobacterota</taxon>
        <taxon>Epsilonproteobacteria</taxon>
        <taxon>Campylobacterales</taxon>
        <taxon>Campylobacteraceae</taxon>
        <taxon>Campylobacter</taxon>
    </lineage>
</organism>
<sequence length="279" mass="32242">MKLCVALDLSTKEECLQLAKELKNLDIWLKVGLRAYLRDGFKFIEELKKVDDFKIFLDLKIHDIPNTMADACEEVSKLGVDMINIHASAGKIAIQEVMTRLSKFSKRPLVLAVSALTSFDEENFFSIYRQKIEEAVINFSKISYENGLDGMVCSVFESKKIKEHTSSNFLTLTPGIRPFGETSDDQKRVANLAMARENLSDYIVVGRPIYKNENPRAVCEKILNKIHRKNISENDIEQNYEVIQQKEWDMCNHFEEWIKTQPDKEHALKEFYAKCGIKY</sequence>
<keyword id="KW-0210">Decarboxylase</keyword>
<keyword id="KW-0456">Lyase</keyword>
<keyword id="KW-0665">Pyrimidine biosynthesis</keyword>
<protein>
    <recommendedName>
        <fullName evidence="1">Orotidine 5'-phosphate decarboxylase</fullName>
        <ecNumber evidence="1">4.1.1.23</ecNumber>
    </recommendedName>
    <alternativeName>
        <fullName evidence="1">OMP decarboxylase</fullName>
        <shortName evidence="1">OMPDCase</shortName>
        <shortName evidence="1">OMPdecase</shortName>
    </alternativeName>
</protein>
<accession>Q5HW86</accession>
<evidence type="ECO:0000255" key="1">
    <source>
        <dbReference type="HAMAP-Rule" id="MF_01200"/>
    </source>
</evidence>
<feature type="chain" id="PRO_0000241851" description="Orotidine 5'-phosphate decarboxylase">
    <location>
        <begin position="1"/>
        <end position="279"/>
    </location>
</feature>
<feature type="active site" description="Proton donor" evidence="1">
    <location>
        <position position="60"/>
    </location>
</feature>
<feature type="binding site" evidence="1">
    <location>
        <position position="8"/>
    </location>
    <ligand>
        <name>substrate</name>
    </ligand>
</feature>
<feature type="binding site" evidence="1">
    <location>
        <position position="30"/>
    </location>
    <ligand>
        <name>substrate</name>
    </ligand>
</feature>
<feature type="binding site" evidence="1">
    <location>
        <begin position="58"/>
        <end position="67"/>
    </location>
    <ligand>
        <name>substrate</name>
    </ligand>
</feature>
<feature type="binding site" evidence="1">
    <location>
        <position position="117"/>
    </location>
    <ligand>
        <name>substrate</name>
    </ligand>
</feature>
<feature type="binding site" evidence="1">
    <location>
        <position position="177"/>
    </location>
    <ligand>
        <name>substrate</name>
    </ligand>
</feature>
<feature type="binding site" evidence="1">
    <location>
        <position position="186"/>
    </location>
    <ligand>
        <name>substrate</name>
    </ligand>
</feature>
<feature type="binding site" evidence="1">
    <location>
        <position position="206"/>
    </location>
    <ligand>
        <name>substrate</name>
    </ligand>
</feature>
<feature type="binding site" evidence="1">
    <location>
        <position position="207"/>
    </location>
    <ligand>
        <name>substrate</name>
    </ligand>
</feature>
<gene>
    <name evidence="1" type="primary">pyrF</name>
    <name type="ordered locus">CJE0430</name>
</gene>
<proteinExistence type="inferred from homology"/>
<comment type="function">
    <text evidence="1">Catalyzes the decarboxylation of orotidine 5'-monophosphate (OMP) to uridine 5'-monophosphate (UMP).</text>
</comment>
<comment type="catalytic activity">
    <reaction evidence="1">
        <text>orotidine 5'-phosphate + H(+) = UMP + CO2</text>
        <dbReference type="Rhea" id="RHEA:11596"/>
        <dbReference type="ChEBI" id="CHEBI:15378"/>
        <dbReference type="ChEBI" id="CHEBI:16526"/>
        <dbReference type="ChEBI" id="CHEBI:57538"/>
        <dbReference type="ChEBI" id="CHEBI:57865"/>
        <dbReference type="EC" id="4.1.1.23"/>
    </reaction>
</comment>
<comment type="pathway">
    <text evidence="1">Pyrimidine metabolism; UMP biosynthesis via de novo pathway; UMP from orotate: step 2/2.</text>
</comment>
<comment type="subunit">
    <text evidence="1">Homodimer.</text>
</comment>
<comment type="similarity">
    <text evidence="1">Belongs to the OMP decarboxylase family. Type 1 subfamily.</text>
</comment>
<name>PYRF_CAMJR</name>
<dbReference type="EC" id="4.1.1.23" evidence="1"/>
<dbReference type="EMBL" id="CP000025">
    <property type="protein sequence ID" value="AAW35019.1"/>
    <property type="molecule type" value="Genomic_DNA"/>
</dbReference>
<dbReference type="RefSeq" id="WP_002860283.1">
    <property type="nucleotide sequence ID" value="NC_003912.7"/>
</dbReference>
<dbReference type="SMR" id="Q5HW86"/>
<dbReference type="KEGG" id="cjr:CJE0430"/>
<dbReference type="HOGENOM" id="CLU_067069_1_1_7"/>
<dbReference type="UniPathway" id="UPA00070">
    <property type="reaction ID" value="UER00120"/>
</dbReference>
<dbReference type="GO" id="GO:0005829">
    <property type="term" value="C:cytosol"/>
    <property type="evidence" value="ECO:0007669"/>
    <property type="project" value="TreeGrafter"/>
</dbReference>
<dbReference type="GO" id="GO:0004590">
    <property type="term" value="F:orotidine-5'-phosphate decarboxylase activity"/>
    <property type="evidence" value="ECO:0007669"/>
    <property type="project" value="UniProtKB-UniRule"/>
</dbReference>
<dbReference type="GO" id="GO:0006207">
    <property type="term" value="P:'de novo' pyrimidine nucleobase biosynthetic process"/>
    <property type="evidence" value="ECO:0007669"/>
    <property type="project" value="InterPro"/>
</dbReference>
<dbReference type="GO" id="GO:0044205">
    <property type="term" value="P:'de novo' UMP biosynthetic process"/>
    <property type="evidence" value="ECO:0007669"/>
    <property type="project" value="UniProtKB-UniRule"/>
</dbReference>
<dbReference type="CDD" id="cd04725">
    <property type="entry name" value="OMP_decarboxylase_like"/>
    <property type="match status" value="1"/>
</dbReference>
<dbReference type="Gene3D" id="3.20.20.70">
    <property type="entry name" value="Aldolase class I"/>
    <property type="match status" value="1"/>
</dbReference>
<dbReference type="HAMAP" id="MF_01200_B">
    <property type="entry name" value="OMPdecase_type1_B"/>
    <property type="match status" value="1"/>
</dbReference>
<dbReference type="InterPro" id="IPR013785">
    <property type="entry name" value="Aldolase_TIM"/>
</dbReference>
<dbReference type="InterPro" id="IPR014732">
    <property type="entry name" value="OMPdecase"/>
</dbReference>
<dbReference type="InterPro" id="IPR018089">
    <property type="entry name" value="OMPdecase_AS"/>
</dbReference>
<dbReference type="InterPro" id="IPR047596">
    <property type="entry name" value="OMPdecase_bac"/>
</dbReference>
<dbReference type="InterPro" id="IPR001754">
    <property type="entry name" value="OMPdeCOase_dom"/>
</dbReference>
<dbReference type="InterPro" id="IPR011060">
    <property type="entry name" value="RibuloseP-bd_barrel"/>
</dbReference>
<dbReference type="NCBIfam" id="NF001273">
    <property type="entry name" value="PRK00230.1"/>
    <property type="match status" value="1"/>
</dbReference>
<dbReference type="NCBIfam" id="TIGR01740">
    <property type="entry name" value="pyrF"/>
    <property type="match status" value="1"/>
</dbReference>
<dbReference type="PANTHER" id="PTHR32119">
    <property type="entry name" value="OROTIDINE 5'-PHOSPHATE DECARBOXYLASE"/>
    <property type="match status" value="1"/>
</dbReference>
<dbReference type="PANTHER" id="PTHR32119:SF2">
    <property type="entry name" value="OROTIDINE 5'-PHOSPHATE DECARBOXYLASE"/>
    <property type="match status" value="1"/>
</dbReference>
<dbReference type="Pfam" id="PF00215">
    <property type="entry name" value="OMPdecase"/>
    <property type="match status" value="1"/>
</dbReference>
<dbReference type="SMART" id="SM00934">
    <property type="entry name" value="OMPdecase"/>
    <property type="match status" value="1"/>
</dbReference>
<dbReference type="SUPFAM" id="SSF51366">
    <property type="entry name" value="Ribulose-phoshate binding barrel"/>
    <property type="match status" value="1"/>
</dbReference>
<dbReference type="PROSITE" id="PS00156">
    <property type="entry name" value="OMPDECASE"/>
    <property type="match status" value="1"/>
</dbReference>
<reference key="1">
    <citation type="journal article" date="2005" name="PLoS Biol.">
        <title>Major structural differences and novel potential virulence mechanisms from the genomes of multiple Campylobacter species.</title>
        <authorList>
            <person name="Fouts D.E."/>
            <person name="Mongodin E.F."/>
            <person name="Mandrell R.E."/>
            <person name="Miller W.G."/>
            <person name="Rasko D.A."/>
            <person name="Ravel J."/>
            <person name="Brinkac L.M."/>
            <person name="DeBoy R.T."/>
            <person name="Parker C.T."/>
            <person name="Daugherty S.C."/>
            <person name="Dodson R.J."/>
            <person name="Durkin A.S."/>
            <person name="Madupu R."/>
            <person name="Sullivan S.A."/>
            <person name="Shetty J.U."/>
            <person name="Ayodeji M.A."/>
            <person name="Shvartsbeyn A."/>
            <person name="Schatz M.C."/>
            <person name="Badger J.H."/>
            <person name="Fraser C.M."/>
            <person name="Nelson K.E."/>
        </authorList>
    </citation>
    <scope>NUCLEOTIDE SEQUENCE [LARGE SCALE GENOMIC DNA]</scope>
    <source>
        <strain>RM1221</strain>
    </source>
</reference>